<keyword id="KW-0150">Chloroplast</keyword>
<keyword id="KW-0934">Plastid</keyword>
<keyword id="KW-1185">Reference proteome</keyword>
<keyword id="KW-0687">Ribonucleoprotein</keyword>
<keyword id="KW-0689">Ribosomal protein</keyword>
<geneLocation type="chloroplast"/>
<proteinExistence type="inferred from homology"/>
<dbReference type="EMBL" id="AB002583">
    <property type="protein sequence ID" value="BAC76238.1"/>
    <property type="molecule type" value="Genomic_DNA"/>
</dbReference>
<dbReference type="RefSeq" id="NP_849076.1">
    <property type="nucleotide sequence ID" value="NC_004799.1"/>
</dbReference>
<dbReference type="SMR" id="Q85FV6"/>
<dbReference type="STRING" id="280699.Q85FV6"/>
<dbReference type="EnsemblPlants" id="CMV171CT">
    <property type="protein sequence ID" value="CMV171CT"/>
    <property type="gene ID" value="CMV171C"/>
</dbReference>
<dbReference type="GeneID" id="844972"/>
<dbReference type="Gramene" id="CMV171CT">
    <property type="protein sequence ID" value="CMV171CT"/>
    <property type="gene ID" value="CMV171C"/>
</dbReference>
<dbReference type="KEGG" id="cme:CymeCp144"/>
<dbReference type="eggNOG" id="KOG3422">
    <property type="taxonomic scope" value="Eukaryota"/>
</dbReference>
<dbReference type="HOGENOM" id="CLU_078858_2_1_1"/>
<dbReference type="Proteomes" id="UP000007014">
    <property type="component" value="Chloroplast"/>
</dbReference>
<dbReference type="GO" id="GO:0009507">
    <property type="term" value="C:chloroplast"/>
    <property type="evidence" value="ECO:0007669"/>
    <property type="project" value="UniProtKB-SubCell"/>
</dbReference>
<dbReference type="GO" id="GO:0005762">
    <property type="term" value="C:mitochondrial large ribosomal subunit"/>
    <property type="evidence" value="ECO:0007669"/>
    <property type="project" value="TreeGrafter"/>
</dbReference>
<dbReference type="GO" id="GO:0019843">
    <property type="term" value="F:rRNA binding"/>
    <property type="evidence" value="ECO:0007669"/>
    <property type="project" value="InterPro"/>
</dbReference>
<dbReference type="GO" id="GO:0003735">
    <property type="term" value="F:structural constituent of ribosome"/>
    <property type="evidence" value="ECO:0007669"/>
    <property type="project" value="InterPro"/>
</dbReference>
<dbReference type="GO" id="GO:0032543">
    <property type="term" value="P:mitochondrial translation"/>
    <property type="evidence" value="ECO:0007669"/>
    <property type="project" value="TreeGrafter"/>
</dbReference>
<dbReference type="CDD" id="cd01433">
    <property type="entry name" value="Ribosomal_L16_L10e"/>
    <property type="match status" value="1"/>
</dbReference>
<dbReference type="FunFam" id="3.90.1170.10:FF:000001">
    <property type="entry name" value="50S ribosomal protein L16"/>
    <property type="match status" value="1"/>
</dbReference>
<dbReference type="Gene3D" id="3.90.1170.10">
    <property type="entry name" value="Ribosomal protein L10e/L16"/>
    <property type="match status" value="1"/>
</dbReference>
<dbReference type="HAMAP" id="MF_01342">
    <property type="entry name" value="Ribosomal_uL16"/>
    <property type="match status" value="1"/>
</dbReference>
<dbReference type="InterPro" id="IPR047873">
    <property type="entry name" value="Ribosomal_uL16"/>
</dbReference>
<dbReference type="InterPro" id="IPR000114">
    <property type="entry name" value="Ribosomal_uL16_bact-type"/>
</dbReference>
<dbReference type="InterPro" id="IPR020798">
    <property type="entry name" value="Ribosomal_uL16_CS"/>
</dbReference>
<dbReference type="InterPro" id="IPR016180">
    <property type="entry name" value="Ribosomal_uL16_dom"/>
</dbReference>
<dbReference type="InterPro" id="IPR036920">
    <property type="entry name" value="Ribosomal_uL16_sf"/>
</dbReference>
<dbReference type="NCBIfam" id="TIGR01164">
    <property type="entry name" value="rplP_bact"/>
    <property type="match status" value="1"/>
</dbReference>
<dbReference type="PANTHER" id="PTHR12220">
    <property type="entry name" value="50S/60S RIBOSOMAL PROTEIN L16"/>
    <property type="match status" value="1"/>
</dbReference>
<dbReference type="PANTHER" id="PTHR12220:SF13">
    <property type="entry name" value="LARGE RIBOSOMAL SUBUNIT PROTEIN UL16M"/>
    <property type="match status" value="1"/>
</dbReference>
<dbReference type="Pfam" id="PF00252">
    <property type="entry name" value="Ribosomal_L16"/>
    <property type="match status" value="1"/>
</dbReference>
<dbReference type="PRINTS" id="PR00060">
    <property type="entry name" value="RIBOSOMALL16"/>
</dbReference>
<dbReference type="SUPFAM" id="SSF54686">
    <property type="entry name" value="Ribosomal protein L16p/L10e"/>
    <property type="match status" value="1"/>
</dbReference>
<dbReference type="PROSITE" id="PS00586">
    <property type="entry name" value="RIBOSOMAL_L16_1"/>
    <property type="match status" value="1"/>
</dbReference>
<dbReference type="PROSITE" id="PS00701">
    <property type="entry name" value="RIBOSOMAL_L16_2"/>
    <property type="match status" value="1"/>
</dbReference>
<organism>
    <name type="scientific">Cyanidioschyzon merolae (strain NIES-3377 / 10D)</name>
    <name type="common">Unicellular red alga</name>
    <dbReference type="NCBI Taxonomy" id="280699"/>
    <lineage>
        <taxon>Eukaryota</taxon>
        <taxon>Rhodophyta</taxon>
        <taxon>Bangiophyceae</taxon>
        <taxon>Cyanidiales</taxon>
        <taxon>Cyanidiaceae</taxon>
        <taxon>Cyanidioschyzon</taxon>
    </lineage>
</organism>
<protein>
    <recommendedName>
        <fullName evidence="1">Large ribosomal subunit protein uL16c</fullName>
    </recommendedName>
    <alternativeName>
        <fullName evidence="2">50S ribosomal protein L16, chloroplastic</fullName>
    </alternativeName>
</protein>
<name>RK16_CYAM1</name>
<comment type="subunit">
    <text evidence="1">Part of the 50S ribosomal subunit.</text>
</comment>
<comment type="subcellular location">
    <subcellularLocation>
        <location>Plastid</location>
        <location>Chloroplast</location>
    </subcellularLocation>
</comment>
<comment type="similarity">
    <text evidence="1">Belongs to the universal ribosomal protein uL16 family.</text>
</comment>
<sequence>MLSPKNTKYRKPHLGRLKGRASRCNQIAFGDYALQAKERVWLTSRQIEATRRTLTRYMKRGGKLWIRVFPDRAVTAKPAETRMGSGKGAPEYWAAPVRPDQILFELKGVPFQVAKEAIHMASYKLPIRVKMLCRNNNENNNSV</sequence>
<evidence type="ECO:0000255" key="1">
    <source>
        <dbReference type="HAMAP-Rule" id="MF_01342"/>
    </source>
</evidence>
<evidence type="ECO:0000305" key="2"/>
<feature type="chain" id="PRO_0000062278" description="Large ribosomal subunit protein uL16c">
    <location>
        <begin position="1"/>
        <end position="143"/>
    </location>
</feature>
<gene>
    <name evidence="1" type="primary">rpl16</name>
</gene>
<reference key="1">
    <citation type="journal article" date="2003" name="DNA Res.">
        <title>Complete sequence and analysis of the plastid genome of the unicellular red alga Cyanidioschyzon merolae.</title>
        <authorList>
            <person name="Ohta N."/>
            <person name="Matsuzaki M."/>
            <person name="Misumi O."/>
            <person name="Miyagishima S.-Y."/>
            <person name="Nozaki H."/>
            <person name="Tanaka K."/>
            <person name="Shin-i T."/>
            <person name="Kohara Y."/>
            <person name="Kuroiwa T."/>
        </authorList>
    </citation>
    <scope>NUCLEOTIDE SEQUENCE [LARGE SCALE GENOMIC DNA]</scope>
    <source>
        <strain>NIES-3377 / 10D</strain>
    </source>
</reference>
<accession>Q85FV6</accession>